<reference key="1">
    <citation type="submission" date="1998-12" db="EMBL/GenBank/DDBJ databases">
        <title>Identification and characterization of novel zinc finger proteins in the human ovary.</title>
        <authorList>
            <person name="Okada T."/>
            <person name="Mizutani T."/>
            <person name="Miyamoto K."/>
        </authorList>
    </citation>
    <scope>NUCLEOTIDE SEQUENCE [MRNA] (ISOFORM 2)</scope>
    <scope>VARIANT ALA-212</scope>
    <source>
        <tissue>Ovary</tissue>
    </source>
</reference>
<reference key="2">
    <citation type="journal article" date="2004" name="Nat. Genet.">
        <title>Complete sequencing and characterization of 21,243 full-length human cDNAs.</title>
        <authorList>
            <person name="Ota T."/>
            <person name="Suzuki Y."/>
            <person name="Nishikawa T."/>
            <person name="Otsuki T."/>
            <person name="Sugiyama T."/>
            <person name="Irie R."/>
            <person name="Wakamatsu A."/>
            <person name="Hayashi K."/>
            <person name="Sato H."/>
            <person name="Nagai K."/>
            <person name="Kimura K."/>
            <person name="Makita H."/>
            <person name="Sekine M."/>
            <person name="Obayashi M."/>
            <person name="Nishi T."/>
            <person name="Shibahara T."/>
            <person name="Tanaka T."/>
            <person name="Ishii S."/>
            <person name="Yamamoto J."/>
            <person name="Saito K."/>
            <person name="Kawai Y."/>
            <person name="Isono Y."/>
            <person name="Nakamura Y."/>
            <person name="Nagahari K."/>
            <person name="Murakami K."/>
            <person name="Yasuda T."/>
            <person name="Iwayanagi T."/>
            <person name="Wagatsuma M."/>
            <person name="Shiratori A."/>
            <person name="Sudo H."/>
            <person name="Hosoiri T."/>
            <person name="Kaku Y."/>
            <person name="Kodaira H."/>
            <person name="Kondo H."/>
            <person name="Sugawara M."/>
            <person name="Takahashi M."/>
            <person name="Kanda K."/>
            <person name="Yokoi T."/>
            <person name="Furuya T."/>
            <person name="Kikkawa E."/>
            <person name="Omura Y."/>
            <person name="Abe K."/>
            <person name="Kamihara K."/>
            <person name="Katsuta N."/>
            <person name="Sato K."/>
            <person name="Tanikawa M."/>
            <person name="Yamazaki M."/>
            <person name="Ninomiya K."/>
            <person name="Ishibashi T."/>
            <person name="Yamashita H."/>
            <person name="Murakawa K."/>
            <person name="Fujimori K."/>
            <person name="Tanai H."/>
            <person name="Kimata M."/>
            <person name="Watanabe M."/>
            <person name="Hiraoka S."/>
            <person name="Chiba Y."/>
            <person name="Ishida S."/>
            <person name="Ono Y."/>
            <person name="Takiguchi S."/>
            <person name="Watanabe S."/>
            <person name="Yosida M."/>
            <person name="Hotuta T."/>
            <person name="Kusano J."/>
            <person name="Kanehori K."/>
            <person name="Takahashi-Fujii A."/>
            <person name="Hara H."/>
            <person name="Tanase T.-O."/>
            <person name="Nomura Y."/>
            <person name="Togiya S."/>
            <person name="Komai F."/>
            <person name="Hara R."/>
            <person name="Takeuchi K."/>
            <person name="Arita M."/>
            <person name="Imose N."/>
            <person name="Musashino K."/>
            <person name="Yuuki H."/>
            <person name="Oshima A."/>
            <person name="Sasaki N."/>
            <person name="Aotsuka S."/>
            <person name="Yoshikawa Y."/>
            <person name="Matsunawa H."/>
            <person name="Ichihara T."/>
            <person name="Shiohata N."/>
            <person name="Sano S."/>
            <person name="Moriya S."/>
            <person name="Momiyama H."/>
            <person name="Satoh N."/>
            <person name="Takami S."/>
            <person name="Terashima Y."/>
            <person name="Suzuki O."/>
            <person name="Nakagawa S."/>
            <person name="Senoh A."/>
            <person name="Mizoguchi H."/>
            <person name="Goto Y."/>
            <person name="Shimizu F."/>
            <person name="Wakebe H."/>
            <person name="Hishigaki H."/>
            <person name="Watanabe T."/>
            <person name="Sugiyama A."/>
            <person name="Takemoto M."/>
            <person name="Kawakami B."/>
            <person name="Yamazaki M."/>
            <person name="Watanabe K."/>
            <person name="Kumagai A."/>
            <person name="Itakura S."/>
            <person name="Fukuzumi Y."/>
            <person name="Fujimori Y."/>
            <person name="Komiyama M."/>
            <person name="Tashiro H."/>
            <person name="Tanigami A."/>
            <person name="Fujiwara T."/>
            <person name="Ono T."/>
            <person name="Yamada K."/>
            <person name="Fujii Y."/>
            <person name="Ozaki K."/>
            <person name="Hirao M."/>
            <person name="Ohmori Y."/>
            <person name="Kawabata A."/>
            <person name="Hikiji T."/>
            <person name="Kobatake N."/>
            <person name="Inagaki H."/>
            <person name="Ikema Y."/>
            <person name="Okamoto S."/>
            <person name="Okitani R."/>
            <person name="Kawakami T."/>
            <person name="Noguchi S."/>
            <person name="Itoh T."/>
            <person name="Shigeta K."/>
            <person name="Senba T."/>
            <person name="Matsumura K."/>
            <person name="Nakajima Y."/>
            <person name="Mizuno T."/>
            <person name="Morinaga M."/>
            <person name="Sasaki M."/>
            <person name="Togashi T."/>
            <person name="Oyama M."/>
            <person name="Hata H."/>
            <person name="Watanabe M."/>
            <person name="Komatsu T."/>
            <person name="Mizushima-Sugano J."/>
            <person name="Satoh T."/>
            <person name="Shirai Y."/>
            <person name="Takahashi Y."/>
            <person name="Nakagawa K."/>
            <person name="Okumura K."/>
            <person name="Nagase T."/>
            <person name="Nomura N."/>
            <person name="Kikuchi H."/>
            <person name="Masuho Y."/>
            <person name="Yamashita R."/>
            <person name="Nakai K."/>
            <person name="Yada T."/>
            <person name="Nakamura Y."/>
            <person name="Ohara O."/>
            <person name="Isogai T."/>
            <person name="Sugano S."/>
        </authorList>
    </citation>
    <scope>NUCLEOTIDE SEQUENCE [LARGE SCALE MRNA] (ISOFORM 1)</scope>
    <source>
        <tissue>Brain</tissue>
    </source>
</reference>
<reference key="3">
    <citation type="journal article" date="2004" name="Nature">
        <title>The DNA sequence and biology of human chromosome 19.</title>
        <authorList>
            <person name="Grimwood J."/>
            <person name="Gordon L.A."/>
            <person name="Olsen A.S."/>
            <person name="Terry A."/>
            <person name="Schmutz J."/>
            <person name="Lamerdin J.E."/>
            <person name="Hellsten U."/>
            <person name="Goodstein D."/>
            <person name="Couronne O."/>
            <person name="Tran-Gyamfi M."/>
            <person name="Aerts A."/>
            <person name="Altherr M."/>
            <person name="Ashworth L."/>
            <person name="Bajorek E."/>
            <person name="Black S."/>
            <person name="Branscomb E."/>
            <person name="Caenepeel S."/>
            <person name="Carrano A.V."/>
            <person name="Caoile C."/>
            <person name="Chan Y.M."/>
            <person name="Christensen M."/>
            <person name="Cleland C.A."/>
            <person name="Copeland A."/>
            <person name="Dalin E."/>
            <person name="Dehal P."/>
            <person name="Denys M."/>
            <person name="Detter J.C."/>
            <person name="Escobar J."/>
            <person name="Flowers D."/>
            <person name="Fotopulos D."/>
            <person name="Garcia C."/>
            <person name="Georgescu A.M."/>
            <person name="Glavina T."/>
            <person name="Gomez M."/>
            <person name="Gonzales E."/>
            <person name="Groza M."/>
            <person name="Hammon N."/>
            <person name="Hawkins T."/>
            <person name="Haydu L."/>
            <person name="Ho I."/>
            <person name="Huang W."/>
            <person name="Israni S."/>
            <person name="Jett J."/>
            <person name="Kadner K."/>
            <person name="Kimball H."/>
            <person name="Kobayashi A."/>
            <person name="Larionov V."/>
            <person name="Leem S.-H."/>
            <person name="Lopez F."/>
            <person name="Lou Y."/>
            <person name="Lowry S."/>
            <person name="Malfatti S."/>
            <person name="Martinez D."/>
            <person name="McCready P.M."/>
            <person name="Medina C."/>
            <person name="Morgan J."/>
            <person name="Nelson K."/>
            <person name="Nolan M."/>
            <person name="Ovcharenko I."/>
            <person name="Pitluck S."/>
            <person name="Pollard M."/>
            <person name="Popkie A.P."/>
            <person name="Predki P."/>
            <person name="Quan G."/>
            <person name="Ramirez L."/>
            <person name="Rash S."/>
            <person name="Retterer J."/>
            <person name="Rodriguez A."/>
            <person name="Rogers S."/>
            <person name="Salamov A."/>
            <person name="Salazar A."/>
            <person name="She X."/>
            <person name="Smith D."/>
            <person name="Slezak T."/>
            <person name="Solovyev V."/>
            <person name="Thayer N."/>
            <person name="Tice H."/>
            <person name="Tsai M."/>
            <person name="Ustaszewska A."/>
            <person name="Vo N."/>
            <person name="Wagner M."/>
            <person name="Wheeler J."/>
            <person name="Wu K."/>
            <person name="Xie G."/>
            <person name="Yang J."/>
            <person name="Dubchak I."/>
            <person name="Furey T.S."/>
            <person name="DeJong P."/>
            <person name="Dickson M."/>
            <person name="Gordon D."/>
            <person name="Eichler E.E."/>
            <person name="Pennacchio L.A."/>
            <person name="Richardson P."/>
            <person name="Stubbs L."/>
            <person name="Rokhsar D.S."/>
            <person name="Myers R.M."/>
            <person name="Rubin E.M."/>
            <person name="Lucas S.M."/>
        </authorList>
    </citation>
    <scope>NUCLEOTIDE SEQUENCE [LARGE SCALE GENOMIC DNA]</scope>
</reference>
<reference key="4">
    <citation type="journal article" date="2004" name="Genome Res.">
        <title>The status, quality, and expansion of the NIH full-length cDNA project: the Mammalian Gene Collection (MGC).</title>
        <authorList>
            <consortium name="The MGC Project Team"/>
        </authorList>
    </citation>
    <scope>NUCLEOTIDE SEQUENCE [LARGE SCALE MRNA] (ISOFORM 3)</scope>
</reference>
<reference key="5">
    <citation type="submission" date="1989-08" db="EMBL/GenBank/DDBJ databases">
        <authorList>
            <person name="Ammendola S."/>
            <person name="Ciliberto G."/>
        </authorList>
    </citation>
    <scope>NUCLEOTIDE SEQUENCE [MRNA] OF 403-663 (ISOFORM 1)</scope>
</reference>
<reference key="6">
    <citation type="journal article" date="1990" name="New Biol.">
        <title>Multiple genes encoding zinc finger domains are expressed in human T cells.</title>
        <authorList>
            <person name="Thiesen H.-J."/>
        </authorList>
    </citation>
    <scope>NUCLEOTIDE SEQUENCE [MRNA] OF 413-468</scope>
    <source>
        <tissue>Lymphoid tissue</tissue>
    </source>
</reference>
<keyword id="KW-0025">Alternative splicing</keyword>
<keyword id="KW-0238">DNA-binding</keyword>
<keyword id="KW-0479">Metal-binding</keyword>
<keyword id="KW-0539">Nucleus</keyword>
<keyword id="KW-1267">Proteomics identification</keyword>
<keyword id="KW-1185">Reference proteome</keyword>
<keyword id="KW-0677">Repeat</keyword>
<keyword id="KW-0804">Transcription</keyword>
<keyword id="KW-0805">Transcription regulation</keyword>
<keyword id="KW-0862">Zinc</keyword>
<keyword id="KW-0863">Zinc-finger</keyword>
<protein>
    <recommendedName>
        <fullName>Zinc finger protein 44</fullName>
    </recommendedName>
    <alternativeName>
        <fullName>Gonadotropin-inducible ovary transcription repressor 2</fullName>
        <shortName>GIOT-2</shortName>
    </alternativeName>
    <alternativeName>
        <fullName>Zinc finger protein 55</fullName>
    </alternativeName>
    <alternativeName>
        <fullName>Zinc finger protein 58</fullName>
    </alternativeName>
    <alternativeName>
        <fullName>Zinc finger protein KOX7</fullName>
    </alternativeName>
</protein>
<feature type="chain" id="PRO_0000047377" description="Zinc finger protein 44">
    <location>
        <begin position="1"/>
        <end position="663"/>
    </location>
</feature>
<feature type="domain" description="KRAB" evidence="2">
    <location>
        <begin position="52"/>
        <end position="138"/>
    </location>
</feature>
<feature type="zinc finger region" description="C2H2-type 1; atypical" evidence="1">
    <location>
        <begin position="189"/>
        <end position="211"/>
    </location>
</feature>
<feature type="zinc finger region" description="C2H2-type 2; degenerate" evidence="1">
    <location>
        <begin position="217"/>
        <end position="239"/>
    </location>
</feature>
<feature type="zinc finger region" description="C2H2-type 3" evidence="1">
    <location>
        <begin position="245"/>
        <end position="267"/>
    </location>
</feature>
<feature type="zinc finger region" description="C2H2-type 4" evidence="1">
    <location>
        <begin position="273"/>
        <end position="295"/>
    </location>
</feature>
<feature type="zinc finger region" description="C2H2-type 5" evidence="1">
    <location>
        <begin position="301"/>
        <end position="323"/>
    </location>
</feature>
<feature type="zinc finger region" description="C2H2-type 6" evidence="1">
    <location>
        <begin position="329"/>
        <end position="351"/>
    </location>
</feature>
<feature type="zinc finger region" description="C2H2-type 7" evidence="1">
    <location>
        <begin position="357"/>
        <end position="379"/>
    </location>
</feature>
<feature type="zinc finger region" description="C2H2-type 8" evidence="1">
    <location>
        <begin position="385"/>
        <end position="407"/>
    </location>
</feature>
<feature type="zinc finger region" description="C2H2-type 9" evidence="1">
    <location>
        <begin position="413"/>
        <end position="435"/>
    </location>
</feature>
<feature type="zinc finger region" description="C2H2-type 10" evidence="1">
    <location>
        <begin position="441"/>
        <end position="463"/>
    </location>
</feature>
<feature type="zinc finger region" description="C2H2-type 11" evidence="1">
    <location>
        <begin position="469"/>
        <end position="491"/>
    </location>
</feature>
<feature type="zinc finger region" description="C2H2-type 12" evidence="1">
    <location>
        <begin position="497"/>
        <end position="518"/>
    </location>
</feature>
<feature type="zinc finger region" description="C2H2-type 13" evidence="1">
    <location>
        <begin position="524"/>
        <end position="546"/>
    </location>
</feature>
<feature type="zinc finger region" description="C2H2-type 14" evidence="1">
    <location>
        <begin position="552"/>
        <end position="574"/>
    </location>
</feature>
<feature type="zinc finger region" description="C2H2-type 15" evidence="1">
    <location>
        <begin position="580"/>
        <end position="602"/>
    </location>
</feature>
<feature type="zinc finger region" description="C2H2-type 16" evidence="1">
    <location>
        <begin position="608"/>
        <end position="630"/>
    </location>
</feature>
<feature type="zinc finger region" description="C2H2-type 17" evidence="1">
    <location>
        <begin position="636"/>
        <end position="658"/>
    </location>
</feature>
<feature type="splice variant" id="VSP_035757" description="In isoform 2." evidence="5">
    <location>
        <begin position="1"/>
        <end position="48"/>
    </location>
</feature>
<feature type="splice variant" id="VSP_035758" description="In isoform 2." evidence="5">
    <original>Q</original>
    <variation>M</variation>
    <location>
        <position position="49"/>
    </location>
</feature>
<feature type="splice variant" id="VSP_035759" description="In isoform 2 and isoform 3." evidence="4 5">
    <location>
        <begin position="638"/>
        <end position="663"/>
    </location>
</feature>
<feature type="sequence variant" id="VAR_047425" description="In dbSNP:rs11882046.">
    <original>G</original>
    <variation>A</variation>
    <location>
        <position position="92"/>
    </location>
</feature>
<feature type="sequence variant" id="VAR_047426" description="In dbSNP:rs11879168." evidence="3">
    <original>T</original>
    <variation>A</variation>
    <location>
        <position position="212"/>
    </location>
</feature>
<feature type="sequence conflict" description="In Ref. 1; BAA86988." evidence="6" ref="1">
    <original>I</original>
    <variation>R</variation>
    <location>
        <position position="389"/>
    </location>
</feature>
<sequence>MALCYGTFWGYPKMLEAANLMEGLVDIGPWVTLPRGQPEVLEWGLPKDQDSVAFEDVAVNFTHEEWALLGPSQKNLYRDVMRETIRNLNCIGMKWENQNIDDQHQNLRRNPRCDVVERFGKSKDGSQCGETLSQIRNSIVNKNTPARVDACGSSVNGEVIMGHSSLNCYIRVDTGHKHRECHEYAEKSYTHKQCGKGLSYRHSFQTCERPHTGKKPYDCKECGKTFSSPGNLRRHMVVKGGDGPYKCELCGKAFFWPSLLRMHERTHTGEKPYECKQCSKAFPVYSSYLRHEKIHTGEKPYECKQCSKAFPDYSSYLRHERTHTGEKPYKCKQCGKAFSVSGSLRVHERIHTGEKPYTCKQCGKAFCHLGSFQRHMIMHSGDGPHKCKICGKGFDFPGSARIHEGTHTLEKPYECKQCGKLLSHRSSFRRHMMAHTGDGPHKCTVCGKAFDSPSVFQRHERTHTGEKPYECKQCGKAFRTSSSLRKHETTHTGEQPYKCKCGKAFSDLFSFQSHETTHSEEEPYECKECGKAFSSFKYFCRHERTHSEEKSYECQICGKAFSRFSYLKTHERTHTAEKPYECKQCRKAFFWPSFLLRHERTHTGERPYECKHCGKAFSRSSFCREHERTHTGEKPYECKECGKAFSSLSSFNRHKRTHWKDIL</sequence>
<dbReference type="EMBL" id="AB021642">
    <property type="protein sequence ID" value="BAA86988.1"/>
    <property type="molecule type" value="mRNA"/>
</dbReference>
<dbReference type="EMBL" id="AK297528">
    <property type="protein sequence ID" value="BAG59931.1"/>
    <property type="molecule type" value="mRNA"/>
</dbReference>
<dbReference type="EMBL" id="AC012618">
    <property type="status" value="NOT_ANNOTATED_CDS"/>
    <property type="molecule type" value="Genomic_DNA"/>
</dbReference>
<dbReference type="EMBL" id="BC136502">
    <property type="protein sequence ID" value="AAI36503.1"/>
    <property type="molecule type" value="mRNA"/>
</dbReference>
<dbReference type="EMBL" id="X16281">
    <property type="protein sequence ID" value="CAA34357.1"/>
    <property type="status" value="ALT_FRAME"/>
    <property type="molecule type" value="mRNA"/>
</dbReference>
<dbReference type="EMBL" id="X52338">
    <property type="protein sequence ID" value="CAA36564.1"/>
    <property type="molecule type" value="mRNA"/>
</dbReference>
<dbReference type="CCDS" id="CCDS54223.1">
    <molecule id="P15621-1"/>
</dbReference>
<dbReference type="PIR" id="D56409">
    <property type="entry name" value="S06779"/>
</dbReference>
<dbReference type="RefSeq" id="NP_001157748.1">
    <molecule id="P15621-1"/>
    <property type="nucleotide sequence ID" value="NM_001164276.2"/>
</dbReference>
<dbReference type="RefSeq" id="XP_047294878.1">
    <molecule id="P15621-3"/>
    <property type="nucleotide sequence ID" value="XM_047438922.1"/>
</dbReference>
<dbReference type="RefSeq" id="XP_047294880.1">
    <molecule id="P15621-2"/>
    <property type="nucleotide sequence ID" value="XM_047438924.1"/>
</dbReference>
<dbReference type="SMR" id="P15621"/>
<dbReference type="BioGRID" id="119691">
    <property type="interactions" value="20"/>
</dbReference>
<dbReference type="FunCoup" id="P15621">
    <property type="interactions" value="640"/>
</dbReference>
<dbReference type="IntAct" id="P15621">
    <property type="interactions" value="12"/>
</dbReference>
<dbReference type="STRING" id="9606.ENSP00000348419"/>
<dbReference type="iPTMnet" id="P15621"/>
<dbReference type="PhosphoSitePlus" id="P15621"/>
<dbReference type="BioMuta" id="ZNF44"/>
<dbReference type="DMDM" id="215274197"/>
<dbReference type="jPOST" id="P15621"/>
<dbReference type="MassIVE" id="P15621"/>
<dbReference type="PaxDb" id="9606-ENSP00000348419"/>
<dbReference type="PeptideAtlas" id="P15621"/>
<dbReference type="ProteomicsDB" id="53190">
    <molecule id="P15621-1"/>
</dbReference>
<dbReference type="ProteomicsDB" id="53191">
    <molecule id="P15621-2"/>
</dbReference>
<dbReference type="ProteomicsDB" id="53192">
    <molecule id="P15621-3"/>
</dbReference>
<dbReference type="Pumba" id="P15621"/>
<dbReference type="Antibodypedia" id="835">
    <property type="antibodies" value="105 antibodies from 18 providers"/>
</dbReference>
<dbReference type="DNASU" id="51710"/>
<dbReference type="Ensembl" id="ENST00000356109.10">
    <molecule id="P15621-1"/>
    <property type="protein sequence ID" value="ENSP00000348419.5"/>
    <property type="gene ID" value="ENSG00000197857.16"/>
</dbReference>
<dbReference type="Ensembl" id="ENST00000393337.7">
    <molecule id="P15621-3"/>
    <property type="protein sequence ID" value="ENSP00000377008.3"/>
    <property type="gene ID" value="ENSG00000197857.16"/>
</dbReference>
<dbReference type="Ensembl" id="ENST00000397742.7">
    <molecule id="P15621-2"/>
    <property type="protein sequence ID" value="ENSP00000380850.3"/>
    <property type="gene ID" value="ENSG00000197857.16"/>
</dbReference>
<dbReference type="GeneID" id="51710"/>
<dbReference type="KEGG" id="hsa:51710"/>
<dbReference type="UCSC" id="uc010xmj.3">
    <molecule id="P15621-1"/>
    <property type="organism name" value="human"/>
</dbReference>
<dbReference type="AGR" id="HGNC:13110"/>
<dbReference type="CTD" id="51710"/>
<dbReference type="DisGeNET" id="51710"/>
<dbReference type="GeneCards" id="ZNF44"/>
<dbReference type="HGNC" id="HGNC:13110">
    <property type="gene designation" value="ZNF44"/>
</dbReference>
<dbReference type="HPA" id="ENSG00000197857">
    <property type="expression patterns" value="Low tissue specificity"/>
</dbReference>
<dbReference type="MIM" id="194542">
    <property type="type" value="gene"/>
</dbReference>
<dbReference type="neXtProt" id="NX_P15621"/>
<dbReference type="OpenTargets" id="ENSG00000197857"/>
<dbReference type="PharmGKB" id="PA37685"/>
<dbReference type="VEuPathDB" id="HostDB:ENSG00000197857"/>
<dbReference type="eggNOG" id="KOG1721">
    <property type="taxonomic scope" value="Eukaryota"/>
</dbReference>
<dbReference type="GeneTree" id="ENSGT00950000182755"/>
<dbReference type="HOGENOM" id="CLU_002678_44_3_1"/>
<dbReference type="InParanoid" id="P15621"/>
<dbReference type="OMA" id="NRINTGH"/>
<dbReference type="OrthoDB" id="9507868at2759"/>
<dbReference type="PAN-GO" id="P15621">
    <property type="GO annotations" value="4 GO annotations based on evolutionary models"/>
</dbReference>
<dbReference type="PhylomeDB" id="P15621"/>
<dbReference type="TreeFam" id="TF338854"/>
<dbReference type="PathwayCommons" id="P15621"/>
<dbReference type="SignaLink" id="P15621"/>
<dbReference type="BioGRID-ORCS" id="51710">
    <property type="hits" value="14 hits in 1175 CRISPR screens"/>
</dbReference>
<dbReference type="ChiTaRS" id="ZNF44">
    <property type="organism name" value="human"/>
</dbReference>
<dbReference type="GeneWiki" id="ZNF44"/>
<dbReference type="GenomeRNAi" id="51710"/>
<dbReference type="Pharos" id="P15621">
    <property type="development level" value="Tbio"/>
</dbReference>
<dbReference type="PRO" id="PR:P15621"/>
<dbReference type="Proteomes" id="UP000005640">
    <property type="component" value="Chromosome 19"/>
</dbReference>
<dbReference type="RNAct" id="P15621">
    <property type="molecule type" value="protein"/>
</dbReference>
<dbReference type="Bgee" id="ENSG00000197857">
    <property type="expression patterns" value="Expressed in buccal mucosa cell and 208 other cell types or tissues"/>
</dbReference>
<dbReference type="ExpressionAtlas" id="P15621">
    <property type="expression patterns" value="baseline and differential"/>
</dbReference>
<dbReference type="GO" id="GO:0005634">
    <property type="term" value="C:nucleus"/>
    <property type="evidence" value="ECO:0000318"/>
    <property type="project" value="GO_Central"/>
</dbReference>
<dbReference type="GO" id="GO:0000981">
    <property type="term" value="F:DNA-binding transcription factor activity, RNA polymerase II-specific"/>
    <property type="evidence" value="ECO:0000318"/>
    <property type="project" value="GO_Central"/>
</dbReference>
<dbReference type="GO" id="GO:0000977">
    <property type="term" value="F:RNA polymerase II transcription regulatory region sequence-specific DNA binding"/>
    <property type="evidence" value="ECO:0000318"/>
    <property type="project" value="GO_Central"/>
</dbReference>
<dbReference type="GO" id="GO:0008270">
    <property type="term" value="F:zinc ion binding"/>
    <property type="evidence" value="ECO:0007669"/>
    <property type="project" value="UniProtKB-KW"/>
</dbReference>
<dbReference type="GO" id="GO:0006357">
    <property type="term" value="P:regulation of transcription by RNA polymerase II"/>
    <property type="evidence" value="ECO:0000318"/>
    <property type="project" value="GO_Central"/>
</dbReference>
<dbReference type="CDD" id="cd07765">
    <property type="entry name" value="KRAB_A-box"/>
    <property type="match status" value="1"/>
</dbReference>
<dbReference type="FunFam" id="3.30.160.60:FF:003733">
    <property type="match status" value="1"/>
</dbReference>
<dbReference type="FunFam" id="3.30.160.60:FF:003349">
    <property type="entry name" value="RB associated KRAB zinc finger"/>
    <property type="match status" value="1"/>
</dbReference>
<dbReference type="FunFam" id="3.30.160.60:FF:000193">
    <property type="entry name" value="Zinc finger protein 300"/>
    <property type="match status" value="1"/>
</dbReference>
<dbReference type="FunFam" id="3.30.160.60:FF:000184">
    <property type="entry name" value="Zinc finger protein 333"/>
    <property type="match status" value="2"/>
</dbReference>
<dbReference type="FunFam" id="3.30.160.60:FF:000773">
    <property type="entry name" value="Zinc finger protein 44"/>
    <property type="match status" value="1"/>
</dbReference>
<dbReference type="FunFam" id="3.30.160.60:FF:001433">
    <property type="entry name" value="Zinc finger protein 44"/>
    <property type="match status" value="1"/>
</dbReference>
<dbReference type="FunFam" id="3.30.160.60:FF:001930">
    <property type="entry name" value="Zinc finger protein 44"/>
    <property type="match status" value="1"/>
</dbReference>
<dbReference type="FunFam" id="3.30.160.60:FF:002254">
    <property type="entry name" value="Zinc finger protein 540"/>
    <property type="match status" value="2"/>
</dbReference>
<dbReference type="FunFam" id="3.30.160.60:FF:001254">
    <property type="entry name" value="Zinc finger protein 564"/>
    <property type="match status" value="1"/>
</dbReference>
<dbReference type="FunFam" id="3.30.160.60:FF:000350">
    <property type="entry name" value="Zinc finger protein 699"/>
    <property type="match status" value="1"/>
</dbReference>
<dbReference type="FunFam" id="3.30.160.60:FF:000564">
    <property type="entry name" value="zinc finger protein 699"/>
    <property type="match status" value="1"/>
</dbReference>
<dbReference type="FunFam" id="3.30.160.60:FF:000493">
    <property type="entry name" value="Zinc finger protein 805"/>
    <property type="match status" value="2"/>
</dbReference>
<dbReference type="FunFam" id="3.30.160.60:FF:001459">
    <property type="entry name" value="Zinc finger protein 823"/>
    <property type="match status" value="1"/>
</dbReference>
<dbReference type="Gene3D" id="6.10.140.140">
    <property type="match status" value="1"/>
</dbReference>
<dbReference type="Gene3D" id="3.30.160.60">
    <property type="entry name" value="Classic Zinc Finger"/>
    <property type="match status" value="16"/>
</dbReference>
<dbReference type="InterPro" id="IPR001909">
    <property type="entry name" value="KRAB"/>
</dbReference>
<dbReference type="InterPro" id="IPR036051">
    <property type="entry name" value="KRAB_dom_sf"/>
</dbReference>
<dbReference type="InterPro" id="IPR050826">
    <property type="entry name" value="Krueppel_C2H2_ZnFinger"/>
</dbReference>
<dbReference type="InterPro" id="IPR036236">
    <property type="entry name" value="Znf_C2H2_sf"/>
</dbReference>
<dbReference type="InterPro" id="IPR013087">
    <property type="entry name" value="Znf_C2H2_type"/>
</dbReference>
<dbReference type="PANTHER" id="PTHR24377">
    <property type="entry name" value="IP01015P-RELATED"/>
    <property type="match status" value="1"/>
</dbReference>
<dbReference type="Pfam" id="PF01352">
    <property type="entry name" value="KRAB"/>
    <property type="match status" value="1"/>
</dbReference>
<dbReference type="Pfam" id="PF00096">
    <property type="entry name" value="zf-C2H2"/>
    <property type="match status" value="13"/>
</dbReference>
<dbReference type="SMART" id="SM00349">
    <property type="entry name" value="KRAB"/>
    <property type="match status" value="1"/>
</dbReference>
<dbReference type="SMART" id="SM00355">
    <property type="entry name" value="ZnF_C2H2"/>
    <property type="match status" value="16"/>
</dbReference>
<dbReference type="SUPFAM" id="SSF57667">
    <property type="entry name" value="beta-beta-alpha zinc fingers"/>
    <property type="match status" value="9"/>
</dbReference>
<dbReference type="SUPFAM" id="SSF109640">
    <property type="entry name" value="KRAB domain (Kruppel-associated box)"/>
    <property type="match status" value="1"/>
</dbReference>
<dbReference type="PROSITE" id="PS50805">
    <property type="entry name" value="KRAB"/>
    <property type="match status" value="1"/>
</dbReference>
<dbReference type="PROSITE" id="PS00028">
    <property type="entry name" value="ZINC_FINGER_C2H2_1"/>
    <property type="match status" value="14"/>
</dbReference>
<dbReference type="PROSITE" id="PS50157">
    <property type="entry name" value="ZINC_FINGER_C2H2_2"/>
    <property type="match status" value="17"/>
</dbReference>
<comment type="function">
    <text>May be involved in transcriptional regulation.</text>
</comment>
<comment type="subcellular location">
    <subcellularLocation>
        <location evidence="6">Nucleus</location>
    </subcellularLocation>
</comment>
<comment type="alternative products">
    <event type="alternative splicing"/>
    <isoform>
        <id>P15621-1</id>
        <name>1</name>
        <sequence type="displayed"/>
    </isoform>
    <isoform>
        <id>P15621-2</id>
        <name>2</name>
        <sequence type="described" ref="VSP_035757 VSP_035758 VSP_035759"/>
    </isoform>
    <isoform>
        <id>P15621-3</id>
        <name>3</name>
        <sequence type="described" ref="VSP_035759"/>
    </isoform>
</comment>
<comment type="similarity">
    <text evidence="6">Belongs to the krueppel C2H2-type zinc-finger protein family.</text>
</comment>
<comment type="sequence caution" evidence="6">
    <conflict type="frameshift">
        <sequence resource="EMBL-CDS" id="CAA34357"/>
    </conflict>
</comment>
<gene>
    <name type="primary">ZNF44</name>
    <name type="synonym">GIOT2</name>
    <name type="synonym">KOX7</name>
    <name type="synonym">ZNF55</name>
    <name type="synonym">ZNF58</name>
</gene>
<proteinExistence type="evidence at protein level"/>
<accession>P15621</accession>
<accession>B4DML9</accession>
<accession>B9EGJ5</accession>
<accession>B9ZVM2</accession>
<accession>P17018</accession>
<accession>Q9ULZ7</accession>
<name>ZNF44_HUMAN</name>
<evidence type="ECO:0000255" key="1">
    <source>
        <dbReference type="PROSITE-ProRule" id="PRU00042"/>
    </source>
</evidence>
<evidence type="ECO:0000255" key="2">
    <source>
        <dbReference type="PROSITE-ProRule" id="PRU00119"/>
    </source>
</evidence>
<evidence type="ECO:0000269" key="3">
    <source ref="1"/>
</evidence>
<evidence type="ECO:0000303" key="4">
    <source>
    </source>
</evidence>
<evidence type="ECO:0000303" key="5">
    <source ref="1"/>
</evidence>
<evidence type="ECO:0000305" key="6"/>
<organism>
    <name type="scientific">Homo sapiens</name>
    <name type="common">Human</name>
    <dbReference type="NCBI Taxonomy" id="9606"/>
    <lineage>
        <taxon>Eukaryota</taxon>
        <taxon>Metazoa</taxon>
        <taxon>Chordata</taxon>
        <taxon>Craniata</taxon>
        <taxon>Vertebrata</taxon>
        <taxon>Euteleostomi</taxon>
        <taxon>Mammalia</taxon>
        <taxon>Eutheria</taxon>
        <taxon>Euarchontoglires</taxon>
        <taxon>Primates</taxon>
        <taxon>Haplorrhini</taxon>
        <taxon>Catarrhini</taxon>
        <taxon>Hominidae</taxon>
        <taxon>Homo</taxon>
    </lineage>
</organism>